<proteinExistence type="inferred from homology"/>
<organism>
    <name type="scientific">Shigella flexneri</name>
    <dbReference type="NCBI Taxonomy" id="623"/>
    <lineage>
        <taxon>Bacteria</taxon>
        <taxon>Pseudomonadati</taxon>
        <taxon>Pseudomonadota</taxon>
        <taxon>Gammaproteobacteria</taxon>
        <taxon>Enterobacterales</taxon>
        <taxon>Enterobacteriaceae</taxon>
        <taxon>Shigella</taxon>
    </lineage>
</organism>
<accession>Q83RJ2</accession>
<accession>Q7UCL6</accession>
<protein>
    <recommendedName>
        <fullName evidence="1">RNA chaperone ProQ</fullName>
    </recommendedName>
</protein>
<keyword id="KW-0143">Chaperone</keyword>
<keyword id="KW-0963">Cytoplasm</keyword>
<keyword id="KW-1185">Reference proteome</keyword>
<keyword id="KW-0694">RNA-binding</keyword>
<evidence type="ECO:0000255" key="1">
    <source>
        <dbReference type="HAMAP-Rule" id="MF_00749"/>
    </source>
</evidence>
<evidence type="ECO:0000256" key="2">
    <source>
        <dbReference type="SAM" id="MobiDB-lite"/>
    </source>
</evidence>
<evidence type="ECO:0000305" key="3"/>
<comment type="function">
    <text evidence="1">RNA chaperone with significant RNA binding, RNA strand exchange and RNA duplexing activities. May regulate ProP activity through an RNA-based, post-transcriptional mechanism.</text>
</comment>
<comment type="subcellular location">
    <subcellularLocation>
        <location evidence="1">Cytoplasm</location>
    </subcellularLocation>
</comment>
<comment type="similarity">
    <text evidence="1">Belongs to the ProQ family.</text>
</comment>
<comment type="sequence caution" evidence="3">
    <conflict type="erroneous initiation">
        <sequence resource="EMBL-CDS" id="AAP16891"/>
    </conflict>
    <text>Truncated N-terminus.</text>
</comment>
<reference key="1">
    <citation type="journal article" date="2002" name="Nucleic Acids Res.">
        <title>Genome sequence of Shigella flexneri 2a: insights into pathogenicity through comparison with genomes of Escherichia coli K12 and O157.</title>
        <authorList>
            <person name="Jin Q."/>
            <person name="Yuan Z."/>
            <person name="Xu J."/>
            <person name="Wang Y."/>
            <person name="Shen Y."/>
            <person name="Lu W."/>
            <person name="Wang J."/>
            <person name="Liu H."/>
            <person name="Yang J."/>
            <person name="Yang F."/>
            <person name="Zhang X."/>
            <person name="Zhang J."/>
            <person name="Yang G."/>
            <person name="Wu H."/>
            <person name="Qu D."/>
            <person name="Dong J."/>
            <person name="Sun L."/>
            <person name="Xue Y."/>
            <person name="Zhao A."/>
            <person name="Gao Y."/>
            <person name="Zhu J."/>
            <person name="Kan B."/>
            <person name="Ding K."/>
            <person name="Chen S."/>
            <person name="Cheng H."/>
            <person name="Yao Z."/>
            <person name="He B."/>
            <person name="Chen R."/>
            <person name="Ma D."/>
            <person name="Qiang B."/>
            <person name="Wen Y."/>
            <person name="Hou Y."/>
            <person name="Yu J."/>
        </authorList>
    </citation>
    <scope>NUCLEOTIDE SEQUENCE [LARGE SCALE GENOMIC DNA]</scope>
    <source>
        <strain>301 / Serotype 2a</strain>
    </source>
</reference>
<reference key="2">
    <citation type="journal article" date="2003" name="Infect. Immun.">
        <title>Complete genome sequence and comparative genomics of Shigella flexneri serotype 2a strain 2457T.</title>
        <authorList>
            <person name="Wei J."/>
            <person name="Goldberg M.B."/>
            <person name="Burland V."/>
            <person name="Venkatesan M.M."/>
            <person name="Deng W."/>
            <person name="Fournier G."/>
            <person name="Mayhew G.F."/>
            <person name="Plunkett G. III"/>
            <person name="Rose D.J."/>
            <person name="Darling A."/>
            <person name="Mau B."/>
            <person name="Perna N.T."/>
            <person name="Payne S.M."/>
            <person name="Runyen-Janecky L.J."/>
            <person name="Zhou S."/>
            <person name="Schwartz D.C."/>
            <person name="Blattner F.R."/>
        </authorList>
    </citation>
    <scope>NUCLEOTIDE SEQUENCE [LARGE SCALE GENOMIC DNA]</scope>
    <source>
        <strain>ATCC 700930 / 2457T / Serotype 2a</strain>
    </source>
</reference>
<dbReference type="EMBL" id="AE005674">
    <property type="protein sequence ID" value="AAN42995.3"/>
    <property type="molecule type" value="Genomic_DNA"/>
</dbReference>
<dbReference type="EMBL" id="AE014073">
    <property type="protein sequence ID" value="AAP16891.1"/>
    <property type="status" value="ALT_INIT"/>
    <property type="molecule type" value="Genomic_DNA"/>
</dbReference>
<dbReference type="RefSeq" id="WP_000431370.1">
    <property type="nucleotide sequence ID" value="NZ_WPGW01000080.1"/>
</dbReference>
<dbReference type="SMR" id="Q83RJ2"/>
<dbReference type="STRING" id="198214.SF1394"/>
<dbReference type="PaxDb" id="198214-SF1394"/>
<dbReference type="GeneID" id="93776081"/>
<dbReference type="KEGG" id="sfl:SF1394"/>
<dbReference type="KEGG" id="sfx:S1510"/>
<dbReference type="PATRIC" id="fig|198214.7.peg.1644"/>
<dbReference type="HOGENOM" id="CLU_113254_0_0_6"/>
<dbReference type="Proteomes" id="UP000001006">
    <property type="component" value="Chromosome"/>
</dbReference>
<dbReference type="Proteomes" id="UP000002673">
    <property type="component" value="Chromosome"/>
</dbReference>
<dbReference type="GO" id="GO:0005829">
    <property type="term" value="C:cytosol"/>
    <property type="evidence" value="ECO:0007669"/>
    <property type="project" value="TreeGrafter"/>
</dbReference>
<dbReference type="GO" id="GO:0033592">
    <property type="term" value="F:RNA strand annealing activity"/>
    <property type="evidence" value="ECO:0007669"/>
    <property type="project" value="UniProtKB-UniRule"/>
</dbReference>
<dbReference type="GO" id="GO:0034057">
    <property type="term" value="F:RNA strand-exchange activity"/>
    <property type="evidence" value="ECO:0007669"/>
    <property type="project" value="UniProtKB-UniRule"/>
</dbReference>
<dbReference type="GO" id="GO:0010608">
    <property type="term" value="P:post-transcriptional regulation of gene expression"/>
    <property type="evidence" value="ECO:0007669"/>
    <property type="project" value="InterPro"/>
</dbReference>
<dbReference type="FunFam" id="1.10.1710.10:FF:000001">
    <property type="entry name" value="RNA chaperone ProQ"/>
    <property type="match status" value="1"/>
</dbReference>
<dbReference type="Gene3D" id="1.10.1710.10">
    <property type="entry name" value="ProQ/FinO domain"/>
    <property type="match status" value="1"/>
</dbReference>
<dbReference type="HAMAP" id="MF_00749">
    <property type="entry name" value="ProQ"/>
    <property type="match status" value="1"/>
</dbReference>
<dbReference type="InterPro" id="IPR023529">
    <property type="entry name" value="ProQ"/>
</dbReference>
<dbReference type="InterPro" id="IPR016103">
    <property type="entry name" value="ProQ/FinO"/>
</dbReference>
<dbReference type="InterPro" id="IPR036442">
    <property type="entry name" value="ProQ/FinO_sf"/>
</dbReference>
<dbReference type="InterPro" id="IPR035236">
    <property type="entry name" value="ProQ_C"/>
</dbReference>
<dbReference type="NCBIfam" id="NF003434">
    <property type="entry name" value="PRK04950.1"/>
    <property type="match status" value="1"/>
</dbReference>
<dbReference type="PANTHER" id="PTHR38106">
    <property type="entry name" value="RNA CHAPERONE PROQ"/>
    <property type="match status" value="1"/>
</dbReference>
<dbReference type="PANTHER" id="PTHR38106:SF1">
    <property type="entry name" value="RNA CHAPERONE PROQ"/>
    <property type="match status" value="1"/>
</dbReference>
<dbReference type="Pfam" id="PF04352">
    <property type="entry name" value="ProQ"/>
    <property type="match status" value="1"/>
</dbReference>
<dbReference type="Pfam" id="PF17516">
    <property type="entry name" value="ProQ_C"/>
    <property type="match status" value="1"/>
</dbReference>
<dbReference type="SMART" id="SM00945">
    <property type="entry name" value="ProQ"/>
    <property type="match status" value="1"/>
</dbReference>
<dbReference type="SUPFAM" id="SSF48657">
    <property type="entry name" value="FinO-like"/>
    <property type="match status" value="1"/>
</dbReference>
<gene>
    <name evidence="1" type="primary">proQ</name>
    <name type="ordered locus">SF1394</name>
    <name type="ordered locus">S1510</name>
</gene>
<feature type="chain" id="PRO_0000214624" description="RNA chaperone ProQ">
    <location>
        <begin position="1"/>
        <end position="232"/>
    </location>
</feature>
<feature type="region of interest" description="Disordered" evidence="2">
    <location>
        <begin position="105"/>
        <end position="182"/>
    </location>
</feature>
<feature type="compositionally biased region" description="Basic and acidic residues" evidence="2">
    <location>
        <begin position="117"/>
        <end position="136"/>
    </location>
</feature>
<feature type="compositionally biased region" description="Basic residues" evidence="2">
    <location>
        <begin position="137"/>
        <end position="146"/>
    </location>
</feature>
<feature type="compositionally biased region" description="Basic and acidic residues" evidence="2">
    <location>
        <begin position="147"/>
        <end position="177"/>
    </location>
</feature>
<name>PROQ_SHIFL</name>
<sequence length="232" mass="25862">MENQPKLNSSKEVIAFLAERFPHCFSAEGEARPLKIGIFQDLVDRVAGEMNLSKTQLRSALRLYTSSWRYLYGVKPGATRVDLDGNPCGELDEQHVEHARKQLEEAKARVQAQRAEQQAKKREAAAAAGEKEDAPRRERKPRPTTPRRKEGAERKPRAQKPVEKAPKTVKAPREEQHTPVSDISALTVGQALKVKAGQNAMDATVLEITKDGVRVQLNSGMSLIVRAEHLVF</sequence>